<protein>
    <recommendedName>
        <fullName evidence="5">Temporin-HN2</fullName>
    </recommendedName>
</protein>
<evidence type="ECO:0000255" key="1"/>
<evidence type="ECO:0000269" key="2">
    <source>
    </source>
</evidence>
<evidence type="ECO:0000305" key="3"/>
<evidence type="ECO:0000305" key="4">
    <source>
    </source>
</evidence>
<evidence type="ECO:0000312" key="5">
    <source>
        <dbReference type="EMBL" id="ADV36134.1"/>
    </source>
</evidence>
<sequence>MFTLKKSLLLLLFLGTINLSLSEQERDAKEERRDEMDVEVEKRNILNTIINLAKKILGK</sequence>
<keyword id="KW-0027">Amidation</keyword>
<keyword id="KW-0878">Amphibian defense peptide</keyword>
<keyword id="KW-0044">Antibiotic</keyword>
<keyword id="KW-0929">Antimicrobial</keyword>
<keyword id="KW-0165">Cleavage on pair of basic residues</keyword>
<keyword id="KW-0175">Coiled coil</keyword>
<keyword id="KW-0204">Cytolysis</keyword>
<keyword id="KW-0903">Direct protein sequencing</keyword>
<keyword id="KW-0295">Fungicide</keyword>
<keyword id="KW-0354">Hemolysis</keyword>
<keyword id="KW-0964">Secreted</keyword>
<keyword id="KW-0732">Signal</keyword>
<dbReference type="EMBL" id="HQ735111">
    <property type="protein sequence ID" value="ADV36134.1"/>
    <property type="molecule type" value="mRNA"/>
</dbReference>
<dbReference type="GO" id="GO:0005576">
    <property type="term" value="C:extracellular region"/>
    <property type="evidence" value="ECO:0007669"/>
    <property type="project" value="UniProtKB-SubCell"/>
</dbReference>
<dbReference type="GO" id="GO:0050832">
    <property type="term" value="P:defense response to fungus"/>
    <property type="evidence" value="ECO:0007669"/>
    <property type="project" value="UniProtKB-KW"/>
</dbReference>
<dbReference type="GO" id="GO:0050829">
    <property type="term" value="P:defense response to Gram-negative bacterium"/>
    <property type="evidence" value="ECO:0007669"/>
    <property type="project" value="UniProtKB-ARBA"/>
</dbReference>
<dbReference type="GO" id="GO:0050830">
    <property type="term" value="P:defense response to Gram-positive bacterium"/>
    <property type="evidence" value="ECO:0007669"/>
    <property type="project" value="UniProtKB-ARBA"/>
</dbReference>
<dbReference type="GO" id="GO:0031640">
    <property type="term" value="P:killing of cells of another organism"/>
    <property type="evidence" value="ECO:0007669"/>
    <property type="project" value="UniProtKB-KW"/>
</dbReference>
<dbReference type="InterPro" id="IPR004275">
    <property type="entry name" value="Frog_antimicrobial_propeptide"/>
</dbReference>
<dbReference type="Pfam" id="PF03032">
    <property type="entry name" value="FSAP_sig_propep"/>
    <property type="match status" value="1"/>
</dbReference>
<accession>E7EKD4</accession>
<organism>
    <name type="scientific">Odorrana hainanensis</name>
    <name type="common">Odor frog</name>
    <name type="synonym">Rana hainanensis</name>
    <dbReference type="NCBI Taxonomy" id="431935"/>
    <lineage>
        <taxon>Eukaryota</taxon>
        <taxon>Metazoa</taxon>
        <taxon>Chordata</taxon>
        <taxon>Craniata</taxon>
        <taxon>Vertebrata</taxon>
        <taxon>Euteleostomi</taxon>
        <taxon>Amphibia</taxon>
        <taxon>Batrachia</taxon>
        <taxon>Anura</taxon>
        <taxon>Neobatrachia</taxon>
        <taxon>Ranoidea</taxon>
        <taxon>Ranidae</taxon>
        <taxon>Odorrana</taxon>
    </lineage>
</organism>
<reference evidence="3 5" key="1">
    <citation type="journal article" date="2012" name="Peptides">
        <title>Novel antimicrobial peptides isolated from the skin secretions of Hainan odorous frog, Odorrana hainanensis.</title>
        <authorList>
            <person name="Wang H."/>
            <person name="Yu Z."/>
            <person name="Hu Y."/>
            <person name="Li F."/>
            <person name="Liu L."/>
            <person name="Zheng H."/>
            <person name="Meng H."/>
            <person name="Yang S."/>
            <person name="Yang X."/>
            <person name="Liu J."/>
        </authorList>
    </citation>
    <scope>NUCLEOTIDE SEQUENCE [MRNA]</scope>
    <scope>PROTEIN SEQUENCE OF 44-57</scope>
    <scope>SYNTHESIS OF 44-57</scope>
    <scope>FUNCTION</scope>
    <scope>SUBCELLULAR LOCATION</scope>
    <scope>MASS SPECTROMETRY</scope>
    <scope>AMIDATION AT LEU-57</scope>
    <source>
        <tissue evidence="2">Skin</tissue>
        <tissue evidence="2">Skin secretion</tissue>
    </source>
</reference>
<comment type="function">
    <text evidence="2">Has antimicrobial activity against some Gram-positive bacteria and fungi but has no activity against a range of Gram-negative bacteria except P.faecalis. Active against the Gram-positive bacteria S.aureus ATCC 25923 (MIC=4.8 uM), S.carnosus KHS (MIC=19 uM), B.licheniformis X39 (MIC=19 uM) and R.rhodochrous X15 (MIC=2.4 uM) but is inactive against E.faecium 091299 and E.faecalis 981. Has a less potent antimicrobial activity against the Gram-negative bacterium P.faecalis X29 (MIC=37.5 uM) and is inactive against E.coli, P.aeruginosa and S.typhi. Has antifungal activity against C.albicans ATCC 2002 (MIC=9.5 uM) and is also active against the slime mold 090223 (MIC=9.5 uM). Has extremely low hemolytic activity against human erythrocytes (LC(50)=300 uM).</text>
</comment>
<comment type="subcellular location">
    <subcellularLocation>
        <location evidence="2">Secreted</location>
    </subcellularLocation>
</comment>
<comment type="tissue specificity">
    <text evidence="4">Expressed by the skin glands.</text>
</comment>
<comment type="mass spectrometry"/>
<comment type="similarity">
    <text evidence="1">Belongs to the frog skin active peptide (FSAP) family. Temporin subfamily.</text>
</comment>
<proteinExistence type="evidence at protein level"/>
<feature type="signal peptide" evidence="1">
    <location>
        <begin position="1"/>
        <end position="22"/>
    </location>
</feature>
<feature type="propeptide" id="PRO_0000423527" evidence="1 2">
    <location>
        <begin position="23"/>
        <end position="41"/>
    </location>
</feature>
<feature type="peptide" id="PRO_0000423528" description="Temporin-HN2" evidence="2">
    <location>
        <begin position="44"/>
        <end position="57"/>
    </location>
</feature>
<feature type="coiled-coil region" evidence="1">
    <location>
        <begin position="16"/>
        <end position="44"/>
    </location>
</feature>
<feature type="modified residue" description="Leucine amide" evidence="2">
    <location>
        <position position="57"/>
    </location>
</feature>
<name>TP2_ODOHA</name>